<sequence>MVIIRLARGGSKKRPFYNIVATDSRNRRDGRFIERVGFYNPVATKGEALRIAQDRLTYWQGVGAQLSPTVERLVKQAQKAQPAA</sequence>
<name>RS16_BURM7</name>
<organism>
    <name type="scientific">Burkholderia mallei (strain NCTC 10247)</name>
    <dbReference type="NCBI Taxonomy" id="320389"/>
    <lineage>
        <taxon>Bacteria</taxon>
        <taxon>Pseudomonadati</taxon>
        <taxon>Pseudomonadota</taxon>
        <taxon>Betaproteobacteria</taxon>
        <taxon>Burkholderiales</taxon>
        <taxon>Burkholderiaceae</taxon>
        <taxon>Burkholderia</taxon>
        <taxon>pseudomallei group</taxon>
    </lineage>
</organism>
<keyword id="KW-0687">Ribonucleoprotein</keyword>
<keyword id="KW-0689">Ribosomal protein</keyword>
<gene>
    <name evidence="1" type="primary">rpsP</name>
    <name type="ordered locus">BMA10247_0228</name>
</gene>
<proteinExistence type="inferred from homology"/>
<dbReference type="EMBL" id="CP000548">
    <property type="protein sequence ID" value="ABO05123.1"/>
    <property type="molecule type" value="Genomic_DNA"/>
</dbReference>
<dbReference type="RefSeq" id="WP_004189402.1">
    <property type="nucleotide sequence ID" value="NZ_CP007802.1"/>
</dbReference>
<dbReference type="SMR" id="A3MHR7"/>
<dbReference type="GeneID" id="93061079"/>
<dbReference type="KEGG" id="bmaz:BM44_2764"/>
<dbReference type="KEGG" id="bmn:BMA10247_0228"/>
<dbReference type="PATRIC" id="fig|320389.8.peg.3121"/>
<dbReference type="GO" id="GO:0005737">
    <property type="term" value="C:cytoplasm"/>
    <property type="evidence" value="ECO:0007669"/>
    <property type="project" value="UniProtKB-ARBA"/>
</dbReference>
<dbReference type="GO" id="GO:0015935">
    <property type="term" value="C:small ribosomal subunit"/>
    <property type="evidence" value="ECO:0007669"/>
    <property type="project" value="TreeGrafter"/>
</dbReference>
<dbReference type="GO" id="GO:0003735">
    <property type="term" value="F:structural constituent of ribosome"/>
    <property type="evidence" value="ECO:0007669"/>
    <property type="project" value="InterPro"/>
</dbReference>
<dbReference type="GO" id="GO:0006412">
    <property type="term" value="P:translation"/>
    <property type="evidence" value="ECO:0007669"/>
    <property type="project" value="UniProtKB-UniRule"/>
</dbReference>
<dbReference type="Gene3D" id="3.30.1320.10">
    <property type="match status" value="1"/>
</dbReference>
<dbReference type="HAMAP" id="MF_00385">
    <property type="entry name" value="Ribosomal_bS16"/>
    <property type="match status" value="1"/>
</dbReference>
<dbReference type="InterPro" id="IPR000307">
    <property type="entry name" value="Ribosomal_bS16"/>
</dbReference>
<dbReference type="InterPro" id="IPR023803">
    <property type="entry name" value="Ribosomal_bS16_dom_sf"/>
</dbReference>
<dbReference type="NCBIfam" id="TIGR00002">
    <property type="entry name" value="S16"/>
    <property type="match status" value="1"/>
</dbReference>
<dbReference type="PANTHER" id="PTHR12919">
    <property type="entry name" value="30S RIBOSOMAL PROTEIN S16"/>
    <property type="match status" value="1"/>
</dbReference>
<dbReference type="PANTHER" id="PTHR12919:SF20">
    <property type="entry name" value="SMALL RIBOSOMAL SUBUNIT PROTEIN BS16M"/>
    <property type="match status" value="1"/>
</dbReference>
<dbReference type="Pfam" id="PF00886">
    <property type="entry name" value="Ribosomal_S16"/>
    <property type="match status" value="1"/>
</dbReference>
<dbReference type="SUPFAM" id="SSF54565">
    <property type="entry name" value="Ribosomal protein S16"/>
    <property type="match status" value="1"/>
</dbReference>
<feature type="chain" id="PRO_1000049226" description="Small ribosomal subunit protein bS16">
    <location>
        <begin position="1"/>
        <end position="84"/>
    </location>
</feature>
<reference key="1">
    <citation type="journal article" date="2010" name="Genome Biol. Evol.">
        <title>Continuing evolution of Burkholderia mallei through genome reduction and large-scale rearrangements.</title>
        <authorList>
            <person name="Losada L."/>
            <person name="Ronning C.M."/>
            <person name="DeShazer D."/>
            <person name="Woods D."/>
            <person name="Fedorova N."/>
            <person name="Kim H.S."/>
            <person name="Shabalina S.A."/>
            <person name="Pearson T.R."/>
            <person name="Brinkac L."/>
            <person name="Tan P."/>
            <person name="Nandi T."/>
            <person name="Crabtree J."/>
            <person name="Badger J."/>
            <person name="Beckstrom-Sternberg S."/>
            <person name="Saqib M."/>
            <person name="Schutzer S.E."/>
            <person name="Keim P."/>
            <person name="Nierman W.C."/>
        </authorList>
    </citation>
    <scope>NUCLEOTIDE SEQUENCE [LARGE SCALE GENOMIC DNA]</scope>
    <source>
        <strain>NCTC 10247</strain>
    </source>
</reference>
<comment type="similarity">
    <text evidence="1">Belongs to the bacterial ribosomal protein bS16 family.</text>
</comment>
<accession>A3MHR7</accession>
<protein>
    <recommendedName>
        <fullName evidence="1">Small ribosomal subunit protein bS16</fullName>
    </recommendedName>
    <alternativeName>
        <fullName evidence="2">30S ribosomal protein S16</fullName>
    </alternativeName>
</protein>
<evidence type="ECO:0000255" key="1">
    <source>
        <dbReference type="HAMAP-Rule" id="MF_00385"/>
    </source>
</evidence>
<evidence type="ECO:0000305" key="2"/>